<evidence type="ECO:0000255" key="1">
    <source>
        <dbReference type="HAMAP-Rule" id="MF_00123"/>
    </source>
</evidence>
<reference key="1">
    <citation type="journal article" date="2009" name="Appl. Environ. Microbiol.">
        <title>Genomic analysis of 'Elusimicrobium minutum,' the first cultivated representative of the phylum 'Elusimicrobia' (formerly termite group 1).</title>
        <authorList>
            <person name="Herlemann D.P.R."/>
            <person name="Geissinger O."/>
            <person name="Ikeda-Ohtsubo W."/>
            <person name="Kunin V."/>
            <person name="Sun H."/>
            <person name="Lapidus A."/>
            <person name="Hugenholtz P."/>
            <person name="Brune A."/>
        </authorList>
    </citation>
    <scope>NUCLEOTIDE SEQUENCE [LARGE SCALE GENOMIC DNA]</scope>
    <source>
        <strain>Pei191</strain>
    </source>
</reference>
<comment type="catalytic activity">
    <reaction evidence="1">
        <text>tRNA(Arg) + L-arginine + ATP = L-arginyl-tRNA(Arg) + AMP + diphosphate</text>
        <dbReference type="Rhea" id="RHEA:20301"/>
        <dbReference type="Rhea" id="RHEA-COMP:9658"/>
        <dbReference type="Rhea" id="RHEA-COMP:9673"/>
        <dbReference type="ChEBI" id="CHEBI:30616"/>
        <dbReference type="ChEBI" id="CHEBI:32682"/>
        <dbReference type="ChEBI" id="CHEBI:33019"/>
        <dbReference type="ChEBI" id="CHEBI:78442"/>
        <dbReference type="ChEBI" id="CHEBI:78513"/>
        <dbReference type="ChEBI" id="CHEBI:456215"/>
        <dbReference type="EC" id="6.1.1.19"/>
    </reaction>
</comment>
<comment type="subunit">
    <text evidence="1">Monomer.</text>
</comment>
<comment type="subcellular location">
    <subcellularLocation>
        <location evidence="1">Cytoplasm</location>
    </subcellularLocation>
</comment>
<comment type="similarity">
    <text evidence="1">Belongs to the class-I aminoacyl-tRNA synthetase family.</text>
</comment>
<keyword id="KW-0030">Aminoacyl-tRNA synthetase</keyword>
<keyword id="KW-0067">ATP-binding</keyword>
<keyword id="KW-0963">Cytoplasm</keyword>
<keyword id="KW-0436">Ligase</keyword>
<keyword id="KW-0547">Nucleotide-binding</keyword>
<keyword id="KW-0648">Protein biosynthesis</keyword>
<keyword id="KW-1185">Reference proteome</keyword>
<accession>B2KD56</accession>
<sequence>MLDNLKKDIETKLFNAEVFEGAVLPPVDLTPAPPHTGADISLTWAMSAAKTLKKNPLEIAKAAVKVISEVTFVASASYAAPGFINIILEDSFISSSALDRRLKNRKTAGENKERVLIEFVSANPTGPLHVASGRGASLGDSLVRIFNALGIQCDSEYYVNDSGNQAMLLGVSLKARVNGQEPPENGYHGSYLIEMADEIREMSKDWTEEQFSIYAIEYLIKTHQRDMQAFNVNFTRWFRESELYKESLPAKALDFLKEKGLAYEADGAVWFGTTKDNDDKDRVLVRADGRPTYFLADIAYHKNKYDRGFTTLVDILGADHHGYVPRMKAAVKALGENEESFVPIIHQLVHLIEGGEKVKMSKRSGRFITLKELTEEVGADACRFLFASRTPDAHMNFDIDLAKKRTNENPVFYVQYVHARAASIARMAEQKHLQQAENLVDFKLTPQERTLLIKILWFKHALKNCVRDMSPHHLTTYLIELAGNFHSFYDACRVVDEDNPQTTAHRLLICDRVRERIKKGLEFLGVSAPEEM</sequence>
<organism>
    <name type="scientific">Elusimicrobium minutum (strain Pei191)</name>
    <dbReference type="NCBI Taxonomy" id="445932"/>
    <lineage>
        <taxon>Bacteria</taxon>
        <taxon>Pseudomonadati</taxon>
        <taxon>Elusimicrobiota</taxon>
        <taxon>Elusimicrobia</taxon>
        <taxon>Elusimicrobiales</taxon>
        <taxon>Elusimicrobiaceae</taxon>
        <taxon>Elusimicrobium</taxon>
    </lineage>
</organism>
<proteinExistence type="inferred from homology"/>
<feature type="chain" id="PRO_1000198900" description="Arginine--tRNA ligase">
    <location>
        <begin position="1"/>
        <end position="532"/>
    </location>
</feature>
<feature type="short sequence motif" description="'HIGH' region">
    <location>
        <begin position="122"/>
        <end position="132"/>
    </location>
</feature>
<gene>
    <name evidence="1" type="primary">argS</name>
    <name type="ordered locus">Emin_0897</name>
</gene>
<dbReference type="EC" id="6.1.1.19" evidence="1"/>
<dbReference type="EMBL" id="CP001055">
    <property type="protein sequence ID" value="ACC98452.1"/>
    <property type="molecule type" value="Genomic_DNA"/>
</dbReference>
<dbReference type="RefSeq" id="WP_012415067.1">
    <property type="nucleotide sequence ID" value="NC_010644.1"/>
</dbReference>
<dbReference type="SMR" id="B2KD56"/>
<dbReference type="STRING" id="445932.Emin_0897"/>
<dbReference type="KEGG" id="emi:Emin_0897"/>
<dbReference type="HOGENOM" id="CLU_006406_0_1_0"/>
<dbReference type="OrthoDB" id="9805987at2"/>
<dbReference type="Proteomes" id="UP000001029">
    <property type="component" value="Chromosome"/>
</dbReference>
<dbReference type="GO" id="GO:0005737">
    <property type="term" value="C:cytoplasm"/>
    <property type="evidence" value="ECO:0007669"/>
    <property type="project" value="UniProtKB-SubCell"/>
</dbReference>
<dbReference type="GO" id="GO:0004814">
    <property type="term" value="F:arginine-tRNA ligase activity"/>
    <property type="evidence" value="ECO:0007669"/>
    <property type="project" value="UniProtKB-UniRule"/>
</dbReference>
<dbReference type="GO" id="GO:0005524">
    <property type="term" value="F:ATP binding"/>
    <property type="evidence" value="ECO:0007669"/>
    <property type="project" value="UniProtKB-UniRule"/>
</dbReference>
<dbReference type="GO" id="GO:0006420">
    <property type="term" value="P:arginyl-tRNA aminoacylation"/>
    <property type="evidence" value="ECO:0007669"/>
    <property type="project" value="UniProtKB-UniRule"/>
</dbReference>
<dbReference type="CDD" id="cd00671">
    <property type="entry name" value="ArgRS_core"/>
    <property type="match status" value="1"/>
</dbReference>
<dbReference type="FunFam" id="1.10.730.10:FF:000008">
    <property type="entry name" value="Arginine--tRNA ligase"/>
    <property type="match status" value="1"/>
</dbReference>
<dbReference type="FunFam" id="3.40.50.620:FF:000062">
    <property type="entry name" value="Arginine--tRNA ligase"/>
    <property type="match status" value="1"/>
</dbReference>
<dbReference type="Gene3D" id="3.30.1360.70">
    <property type="entry name" value="Arginyl tRNA synthetase N-terminal domain"/>
    <property type="match status" value="1"/>
</dbReference>
<dbReference type="Gene3D" id="3.40.50.620">
    <property type="entry name" value="HUPs"/>
    <property type="match status" value="1"/>
</dbReference>
<dbReference type="Gene3D" id="1.10.730.10">
    <property type="entry name" value="Isoleucyl-tRNA Synthetase, Domain 1"/>
    <property type="match status" value="1"/>
</dbReference>
<dbReference type="HAMAP" id="MF_00123">
    <property type="entry name" value="Arg_tRNA_synth"/>
    <property type="match status" value="1"/>
</dbReference>
<dbReference type="InterPro" id="IPR001278">
    <property type="entry name" value="Arg-tRNA-ligase"/>
</dbReference>
<dbReference type="InterPro" id="IPR005148">
    <property type="entry name" value="Arg-tRNA-synth_N"/>
</dbReference>
<dbReference type="InterPro" id="IPR036695">
    <property type="entry name" value="Arg-tRNA-synth_N_sf"/>
</dbReference>
<dbReference type="InterPro" id="IPR035684">
    <property type="entry name" value="ArgRS_core"/>
</dbReference>
<dbReference type="InterPro" id="IPR008909">
    <property type="entry name" value="DALR_anticod-bd"/>
</dbReference>
<dbReference type="InterPro" id="IPR014729">
    <property type="entry name" value="Rossmann-like_a/b/a_fold"/>
</dbReference>
<dbReference type="InterPro" id="IPR009080">
    <property type="entry name" value="tRNAsynth_Ia_anticodon-bd"/>
</dbReference>
<dbReference type="NCBIfam" id="TIGR00456">
    <property type="entry name" value="argS"/>
    <property type="match status" value="1"/>
</dbReference>
<dbReference type="PANTHER" id="PTHR11956:SF5">
    <property type="entry name" value="ARGININE--TRNA LIGASE, CYTOPLASMIC"/>
    <property type="match status" value="1"/>
</dbReference>
<dbReference type="PANTHER" id="PTHR11956">
    <property type="entry name" value="ARGINYL-TRNA SYNTHETASE"/>
    <property type="match status" value="1"/>
</dbReference>
<dbReference type="Pfam" id="PF03485">
    <property type="entry name" value="Arg_tRNA_synt_N"/>
    <property type="match status" value="1"/>
</dbReference>
<dbReference type="Pfam" id="PF05746">
    <property type="entry name" value="DALR_1"/>
    <property type="match status" value="1"/>
</dbReference>
<dbReference type="Pfam" id="PF00750">
    <property type="entry name" value="tRNA-synt_1d"/>
    <property type="match status" value="1"/>
</dbReference>
<dbReference type="PRINTS" id="PR01038">
    <property type="entry name" value="TRNASYNTHARG"/>
</dbReference>
<dbReference type="SMART" id="SM01016">
    <property type="entry name" value="Arg_tRNA_synt_N"/>
    <property type="match status" value="1"/>
</dbReference>
<dbReference type="SMART" id="SM00836">
    <property type="entry name" value="DALR_1"/>
    <property type="match status" value="1"/>
</dbReference>
<dbReference type="SUPFAM" id="SSF47323">
    <property type="entry name" value="Anticodon-binding domain of a subclass of class I aminoacyl-tRNA synthetases"/>
    <property type="match status" value="1"/>
</dbReference>
<dbReference type="SUPFAM" id="SSF55190">
    <property type="entry name" value="Arginyl-tRNA synthetase (ArgRS), N-terminal 'additional' domain"/>
    <property type="match status" value="1"/>
</dbReference>
<dbReference type="SUPFAM" id="SSF52374">
    <property type="entry name" value="Nucleotidylyl transferase"/>
    <property type="match status" value="1"/>
</dbReference>
<protein>
    <recommendedName>
        <fullName evidence="1">Arginine--tRNA ligase</fullName>
        <ecNumber evidence="1">6.1.1.19</ecNumber>
    </recommendedName>
    <alternativeName>
        <fullName evidence="1">Arginyl-tRNA synthetase</fullName>
        <shortName evidence="1">ArgRS</shortName>
    </alternativeName>
</protein>
<name>SYR_ELUMP</name>